<sequence length="491" mass="54711">MLAMEKEFDSKLVLQGNSSNGANVSRSKSFSFKAPQENFTSHDFEFGKIYGVGSYSKVVRAKKKETGTVYALKIMDKKFITKENKTAYVKLERIVLDQLEHPGIIKLYFTFQDTSSLYMALESCEGGELFDQITRKGRLSEDEARFYTAEVVDALEYIHSMGLIHRDIKPENLLLTSDGHIKIADFGSVKPMQDSQITVLPNAASDDKACTFVGTAAYVPPEVLNSSPATFGNDLWALGCTLYQMLSGTSPFKDASEWLIFQRIIARDIKFPNHFSEAARDLIDRLLDTEPSRRPGAGSEGYVALKRHPFFNGVDWKNLRSQTPPKLAPDPASQTASPERDDTHGSPWNLTHIGDSLATQNEGHSAPPTSSESSGSITRLASIDSFDSRWQQFLEPGESVLMISAVKKLQKITSKKVQLILTNKPKLIYVDPSKLVVKGNIIWSDNSNDLNVVVTSPSHFKICTPKKVLSFEDAKQRASVWKKAIETLQNR</sequence>
<dbReference type="EC" id="2.7.11.1"/>
<dbReference type="EMBL" id="AF132742">
    <property type="protein sequence ID" value="AAD37165.1"/>
    <property type="molecule type" value="mRNA"/>
</dbReference>
<dbReference type="EMBL" id="AL162875">
    <property type="protein sequence ID" value="CAB85557.1"/>
    <property type="status" value="ALT_INIT"/>
    <property type="molecule type" value="Genomic_DNA"/>
</dbReference>
<dbReference type="EMBL" id="CP002688">
    <property type="protein sequence ID" value="AED90755.1"/>
    <property type="molecule type" value="Genomic_DNA"/>
</dbReference>
<dbReference type="EMBL" id="AF360326">
    <property type="protein sequence ID" value="AAK26036.1"/>
    <property type="molecule type" value="mRNA"/>
</dbReference>
<dbReference type="EMBL" id="AY056336">
    <property type="protein sequence ID" value="AAL07185.1"/>
    <property type="molecule type" value="mRNA"/>
</dbReference>
<dbReference type="PIR" id="T48447">
    <property type="entry name" value="T48447"/>
</dbReference>
<dbReference type="RefSeq" id="NP_568138.1">
    <molecule id="Q9XF67-1"/>
    <property type="nucleotide sequence ID" value="NM_120533.5"/>
</dbReference>
<dbReference type="SMR" id="Q9XF67"/>
<dbReference type="BioGRID" id="15609">
    <property type="interactions" value="7"/>
</dbReference>
<dbReference type="DIP" id="DIP-39596N"/>
<dbReference type="ELM" id="Q9XF67"/>
<dbReference type="FunCoup" id="Q9XF67">
    <property type="interactions" value="3414"/>
</dbReference>
<dbReference type="IntAct" id="Q9XF67">
    <property type="interactions" value="16"/>
</dbReference>
<dbReference type="STRING" id="3702.Q9XF67"/>
<dbReference type="iPTMnet" id="Q9XF67"/>
<dbReference type="PaxDb" id="3702-AT5G04510.1"/>
<dbReference type="ProteomicsDB" id="251347">
    <molecule id="Q9XF67-1"/>
</dbReference>
<dbReference type="DNASU" id="830330"/>
<dbReference type="EnsemblPlants" id="AT5G04510.1">
    <molecule id="Q9XF67-1"/>
    <property type="protein sequence ID" value="AT5G04510.1"/>
    <property type="gene ID" value="AT5G04510"/>
</dbReference>
<dbReference type="GeneID" id="830330"/>
<dbReference type="Gramene" id="AT5G04510.1">
    <molecule id="Q9XF67-1"/>
    <property type="protein sequence ID" value="AT5G04510.1"/>
    <property type="gene ID" value="AT5G04510"/>
</dbReference>
<dbReference type="KEGG" id="ath:AT5G04510"/>
<dbReference type="Araport" id="AT5G04510"/>
<dbReference type="TAIR" id="AT5G04510">
    <property type="gene designation" value="PDK1"/>
</dbReference>
<dbReference type="eggNOG" id="KOG0592">
    <property type="taxonomic scope" value="Eukaryota"/>
</dbReference>
<dbReference type="HOGENOM" id="CLU_000288_63_9_1"/>
<dbReference type="InParanoid" id="Q9XF67"/>
<dbReference type="OrthoDB" id="347657at2759"/>
<dbReference type="PhylomeDB" id="Q9XF67"/>
<dbReference type="PRO" id="PR:Q9XF67"/>
<dbReference type="Proteomes" id="UP000006548">
    <property type="component" value="Chromosome 5"/>
</dbReference>
<dbReference type="ExpressionAtlas" id="Q9XF67">
    <property type="expression patterns" value="baseline and differential"/>
</dbReference>
<dbReference type="GO" id="GO:0005737">
    <property type="term" value="C:cytoplasm"/>
    <property type="evidence" value="ECO:0007669"/>
    <property type="project" value="UniProtKB-SubCell"/>
</dbReference>
<dbReference type="GO" id="GO:0016020">
    <property type="term" value="C:membrane"/>
    <property type="evidence" value="ECO:0007669"/>
    <property type="project" value="UniProtKB-SubCell"/>
</dbReference>
<dbReference type="GO" id="GO:0005524">
    <property type="term" value="F:ATP binding"/>
    <property type="evidence" value="ECO:0007669"/>
    <property type="project" value="UniProtKB-KW"/>
</dbReference>
<dbReference type="GO" id="GO:0016301">
    <property type="term" value="F:kinase activity"/>
    <property type="evidence" value="ECO:0000250"/>
    <property type="project" value="TAIR"/>
</dbReference>
<dbReference type="GO" id="GO:0070300">
    <property type="term" value="F:phosphatidic acid binding"/>
    <property type="evidence" value="ECO:0000314"/>
    <property type="project" value="UniProtKB"/>
</dbReference>
<dbReference type="GO" id="GO:0035091">
    <property type="term" value="F:phosphatidylinositol binding"/>
    <property type="evidence" value="ECO:0000314"/>
    <property type="project" value="TAIR"/>
</dbReference>
<dbReference type="GO" id="GO:0004672">
    <property type="term" value="F:protein kinase activity"/>
    <property type="evidence" value="ECO:0000314"/>
    <property type="project" value="UniProtKB"/>
</dbReference>
<dbReference type="GO" id="GO:0106310">
    <property type="term" value="F:protein serine kinase activity"/>
    <property type="evidence" value="ECO:0007669"/>
    <property type="project" value="RHEA"/>
</dbReference>
<dbReference type="GO" id="GO:0004674">
    <property type="term" value="F:protein serine/threonine kinase activity"/>
    <property type="evidence" value="ECO:0007005"/>
    <property type="project" value="TAIR"/>
</dbReference>
<dbReference type="GO" id="GO:0045860">
    <property type="term" value="P:positive regulation of protein kinase activity"/>
    <property type="evidence" value="ECO:0000314"/>
    <property type="project" value="TAIR"/>
</dbReference>
<dbReference type="GO" id="GO:0046777">
    <property type="term" value="P:protein autophosphorylation"/>
    <property type="evidence" value="ECO:0000314"/>
    <property type="project" value="UniProtKB"/>
</dbReference>
<dbReference type="CDD" id="cd05581">
    <property type="entry name" value="STKc_PDK1"/>
    <property type="match status" value="1"/>
</dbReference>
<dbReference type="FunFam" id="2.30.29.30:FF:000305">
    <property type="entry name" value="3-phosphoinositide-dependent protein kinase 1"/>
    <property type="match status" value="1"/>
</dbReference>
<dbReference type="FunFam" id="1.10.510.10:FF:000330">
    <property type="entry name" value="3-phosphoinositide-dependent protein kinase 2-like"/>
    <property type="match status" value="1"/>
</dbReference>
<dbReference type="FunFam" id="3.30.200.20:FF:000191">
    <property type="entry name" value="3-phosphoinositide-dependent protein kinase 2-like"/>
    <property type="match status" value="1"/>
</dbReference>
<dbReference type="Gene3D" id="3.30.200.20">
    <property type="entry name" value="Phosphorylase Kinase, domain 1"/>
    <property type="match status" value="1"/>
</dbReference>
<dbReference type="Gene3D" id="2.30.29.30">
    <property type="entry name" value="Pleckstrin-homology domain (PH domain)/Phosphotyrosine-binding domain (PTB)"/>
    <property type="match status" value="1"/>
</dbReference>
<dbReference type="Gene3D" id="1.10.510.10">
    <property type="entry name" value="Transferase(Phosphotransferase) domain 1"/>
    <property type="match status" value="1"/>
</dbReference>
<dbReference type="InterPro" id="IPR011009">
    <property type="entry name" value="Kinase-like_dom_sf"/>
</dbReference>
<dbReference type="InterPro" id="IPR033931">
    <property type="entry name" value="PDK1-typ_PH"/>
</dbReference>
<dbReference type="InterPro" id="IPR039046">
    <property type="entry name" value="PDPK1"/>
</dbReference>
<dbReference type="InterPro" id="IPR011993">
    <property type="entry name" value="PH-like_dom_sf"/>
</dbReference>
<dbReference type="InterPro" id="IPR000719">
    <property type="entry name" value="Prot_kinase_dom"/>
</dbReference>
<dbReference type="InterPro" id="IPR008271">
    <property type="entry name" value="Ser/Thr_kinase_AS"/>
</dbReference>
<dbReference type="InterPro" id="IPR050236">
    <property type="entry name" value="Ser_Thr_kinase_AGC"/>
</dbReference>
<dbReference type="PANTHER" id="PTHR24356:SF163">
    <property type="entry name" value="3-PHOSPHOINOSITIDE-DEPENDENT PROTEIN KINASE 1-RELATED"/>
    <property type="match status" value="1"/>
</dbReference>
<dbReference type="PANTHER" id="PTHR24356">
    <property type="entry name" value="SERINE/THREONINE-PROTEIN KINASE"/>
    <property type="match status" value="1"/>
</dbReference>
<dbReference type="Pfam" id="PF14593">
    <property type="entry name" value="PH_3"/>
    <property type="match status" value="1"/>
</dbReference>
<dbReference type="Pfam" id="PF00069">
    <property type="entry name" value="Pkinase"/>
    <property type="match status" value="1"/>
</dbReference>
<dbReference type="SMART" id="SM00220">
    <property type="entry name" value="S_TKc"/>
    <property type="match status" value="1"/>
</dbReference>
<dbReference type="SUPFAM" id="SSF50729">
    <property type="entry name" value="PH domain-like"/>
    <property type="match status" value="1"/>
</dbReference>
<dbReference type="SUPFAM" id="SSF56112">
    <property type="entry name" value="Protein kinase-like (PK-like)"/>
    <property type="match status" value="1"/>
</dbReference>
<dbReference type="PROSITE" id="PS50011">
    <property type="entry name" value="PROTEIN_KINASE_DOM"/>
    <property type="match status" value="1"/>
</dbReference>
<dbReference type="PROSITE" id="PS00108">
    <property type="entry name" value="PROTEIN_KINASE_ST"/>
    <property type="match status" value="1"/>
</dbReference>
<keyword id="KW-0025">Alternative splicing</keyword>
<keyword id="KW-0067">ATP-binding</keyword>
<keyword id="KW-0963">Cytoplasm</keyword>
<keyword id="KW-0418">Kinase</keyword>
<keyword id="KW-0472">Membrane</keyword>
<keyword id="KW-0547">Nucleotide-binding</keyword>
<keyword id="KW-0597">Phosphoprotein</keyword>
<keyword id="KW-1185">Reference proteome</keyword>
<keyword id="KW-0723">Serine/threonine-protein kinase</keyword>
<keyword id="KW-0808">Transferase</keyword>
<reference key="1">
    <citation type="journal article" date="1999" name="FEBS Lett.">
        <title>Characterisation of a plant 3-phosphoinositide-dependent protein kinase-1 homologue which contains a pleckstrin homology domain.</title>
        <authorList>
            <person name="Deak M."/>
            <person name="Casamayor A."/>
            <person name="Currie R.A."/>
            <person name="Downes C.P."/>
            <person name="Alessi D.R."/>
        </authorList>
    </citation>
    <scope>FUNCTION</scope>
    <scope>LIPID-BINDING</scope>
</reference>
<reference key="2">
    <citation type="journal article" date="2000" name="Nature">
        <title>Sequence and analysis of chromosome 5 of the plant Arabidopsis thaliana.</title>
        <authorList>
            <person name="Tabata S."/>
            <person name="Kaneko T."/>
            <person name="Nakamura Y."/>
            <person name="Kotani H."/>
            <person name="Kato T."/>
            <person name="Asamizu E."/>
            <person name="Miyajima N."/>
            <person name="Sasamoto S."/>
            <person name="Kimura T."/>
            <person name="Hosouchi T."/>
            <person name="Kawashima K."/>
            <person name="Kohara M."/>
            <person name="Matsumoto M."/>
            <person name="Matsuno A."/>
            <person name="Muraki A."/>
            <person name="Nakayama S."/>
            <person name="Nakazaki N."/>
            <person name="Naruo K."/>
            <person name="Okumura S."/>
            <person name="Shinpo S."/>
            <person name="Takeuchi C."/>
            <person name="Wada T."/>
            <person name="Watanabe A."/>
            <person name="Yamada M."/>
            <person name="Yasuda M."/>
            <person name="Sato S."/>
            <person name="de la Bastide M."/>
            <person name="Huang E."/>
            <person name="Spiegel L."/>
            <person name="Gnoj L."/>
            <person name="O'Shaughnessy A."/>
            <person name="Preston R."/>
            <person name="Habermann K."/>
            <person name="Murray J."/>
            <person name="Johnson D."/>
            <person name="Rohlfing T."/>
            <person name="Nelson J."/>
            <person name="Stoneking T."/>
            <person name="Pepin K."/>
            <person name="Spieth J."/>
            <person name="Sekhon M."/>
            <person name="Armstrong J."/>
            <person name="Becker M."/>
            <person name="Belter E."/>
            <person name="Cordum H."/>
            <person name="Cordes M."/>
            <person name="Courtney L."/>
            <person name="Courtney W."/>
            <person name="Dante M."/>
            <person name="Du H."/>
            <person name="Edwards J."/>
            <person name="Fryman J."/>
            <person name="Haakensen B."/>
            <person name="Lamar E."/>
            <person name="Latreille P."/>
            <person name="Leonard S."/>
            <person name="Meyer R."/>
            <person name="Mulvaney E."/>
            <person name="Ozersky P."/>
            <person name="Riley A."/>
            <person name="Strowmatt C."/>
            <person name="Wagner-McPherson C."/>
            <person name="Wollam A."/>
            <person name="Yoakum M."/>
            <person name="Bell M."/>
            <person name="Dedhia N."/>
            <person name="Parnell L."/>
            <person name="Shah R."/>
            <person name="Rodriguez M."/>
            <person name="Hoon See L."/>
            <person name="Vil D."/>
            <person name="Baker J."/>
            <person name="Kirchoff K."/>
            <person name="Toth K."/>
            <person name="King L."/>
            <person name="Bahret A."/>
            <person name="Miller B."/>
            <person name="Marra M.A."/>
            <person name="Martienssen R."/>
            <person name="McCombie W.R."/>
            <person name="Wilson R.K."/>
            <person name="Murphy G."/>
            <person name="Bancroft I."/>
            <person name="Volckaert G."/>
            <person name="Wambutt R."/>
            <person name="Duesterhoeft A."/>
            <person name="Stiekema W."/>
            <person name="Pohl T."/>
            <person name="Entian K.-D."/>
            <person name="Terryn N."/>
            <person name="Hartley N."/>
            <person name="Bent E."/>
            <person name="Johnson S."/>
            <person name="Langham S.-A."/>
            <person name="McCullagh B."/>
            <person name="Robben J."/>
            <person name="Grymonprez B."/>
            <person name="Zimmermann W."/>
            <person name="Ramsperger U."/>
            <person name="Wedler H."/>
            <person name="Balke K."/>
            <person name="Wedler E."/>
            <person name="Peters S."/>
            <person name="van Staveren M."/>
            <person name="Dirkse W."/>
            <person name="Mooijman P."/>
            <person name="Klein Lankhorst R."/>
            <person name="Weitzenegger T."/>
            <person name="Bothe G."/>
            <person name="Rose M."/>
            <person name="Hauf J."/>
            <person name="Berneiser S."/>
            <person name="Hempel S."/>
            <person name="Feldpausch M."/>
            <person name="Lamberth S."/>
            <person name="Villarroel R."/>
            <person name="Gielen J."/>
            <person name="Ardiles W."/>
            <person name="Bents O."/>
            <person name="Lemcke K."/>
            <person name="Kolesov G."/>
            <person name="Mayer K.F.X."/>
            <person name="Rudd S."/>
            <person name="Schoof H."/>
            <person name="Schueller C."/>
            <person name="Zaccaria P."/>
            <person name="Mewes H.-W."/>
            <person name="Bevan M."/>
            <person name="Fransz P.F."/>
        </authorList>
    </citation>
    <scope>NUCLEOTIDE SEQUENCE [LARGE SCALE GENOMIC DNA]</scope>
    <source>
        <strain>cv. Columbia</strain>
    </source>
</reference>
<reference key="3">
    <citation type="journal article" date="2017" name="Plant J.">
        <title>Araport11: a complete reannotation of the Arabidopsis thaliana reference genome.</title>
        <authorList>
            <person name="Cheng C.Y."/>
            <person name="Krishnakumar V."/>
            <person name="Chan A.P."/>
            <person name="Thibaud-Nissen F."/>
            <person name="Schobel S."/>
            <person name="Town C.D."/>
        </authorList>
    </citation>
    <scope>GENOME REANNOTATION</scope>
    <source>
        <strain>cv. Columbia</strain>
    </source>
</reference>
<reference key="4">
    <citation type="journal article" date="2003" name="Science">
        <title>Empirical analysis of transcriptional activity in the Arabidopsis genome.</title>
        <authorList>
            <person name="Yamada K."/>
            <person name="Lim J."/>
            <person name="Dale J.M."/>
            <person name="Chen H."/>
            <person name="Shinn P."/>
            <person name="Palm C.J."/>
            <person name="Southwick A.M."/>
            <person name="Wu H.C."/>
            <person name="Kim C.J."/>
            <person name="Nguyen M."/>
            <person name="Pham P.K."/>
            <person name="Cheuk R.F."/>
            <person name="Karlin-Newmann G."/>
            <person name="Liu S.X."/>
            <person name="Lam B."/>
            <person name="Sakano H."/>
            <person name="Wu T."/>
            <person name="Yu G."/>
            <person name="Miranda M."/>
            <person name="Quach H.L."/>
            <person name="Tripp M."/>
            <person name="Chang C.H."/>
            <person name="Lee J.M."/>
            <person name="Toriumi M.J."/>
            <person name="Chan M.M."/>
            <person name="Tang C.C."/>
            <person name="Onodera C.S."/>
            <person name="Deng J.M."/>
            <person name="Akiyama K."/>
            <person name="Ansari Y."/>
            <person name="Arakawa T."/>
            <person name="Banh J."/>
            <person name="Banno F."/>
            <person name="Bowser L."/>
            <person name="Brooks S.Y."/>
            <person name="Carninci P."/>
            <person name="Chao Q."/>
            <person name="Choy N."/>
            <person name="Enju A."/>
            <person name="Goldsmith A.D."/>
            <person name="Gurjal M."/>
            <person name="Hansen N.F."/>
            <person name="Hayashizaki Y."/>
            <person name="Johnson-Hopson C."/>
            <person name="Hsuan V.W."/>
            <person name="Iida K."/>
            <person name="Karnes M."/>
            <person name="Khan S."/>
            <person name="Koesema E."/>
            <person name="Ishida J."/>
            <person name="Jiang P.X."/>
            <person name="Jones T."/>
            <person name="Kawai J."/>
            <person name="Kamiya A."/>
            <person name="Meyers C."/>
            <person name="Nakajima M."/>
            <person name="Narusaka M."/>
            <person name="Seki M."/>
            <person name="Sakurai T."/>
            <person name="Satou M."/>
            <person name="Tamse R."/>
            <person name="Vaysberg M."/>
            <person name="Wallender E.K."/>
            <person name="Wong C."/>
            <person name="Yamamura Y."/>
            <person name="Yuan S."/>
            <person name="Shinozaki K."/>
            <person name="Davis R.W."/>
            <person name="Theologis A."/>
            <person name="Ecker J.R."/>
        </authorList>
    </citation>
    <scope>NUCLEOTIDE SEQUENCE [LARGE SCALE MRNA]</scope>
    <source>
        <strain>cv. Columbia</strain>
    </source>
</reference>
<reference key="5">
    <citation type="journal article" date="2003" name="Trends Plant Sci.">
        <title>Growth signalling pathways in Arabidopsis and the AGC protein kinases.</title>
        <authorList>
            <person name="Boegre L."/>
            <person name="Okresz L."/>
            <person name="Henriques R."/>
            <person name="Anthony R.G."/>
        </authorList>
    </citation>
    <scope>GENE FAMILY</scope>
    <scope>REVIEW</scope>
</reference>
<reference key="6">
    <citation type="journal article" date="2004" name="Biochem. Biophys. Res. Commun.">
        <title>Phosphoinositide-dependent kinase-1 orthologues from five eukaryotes are activated by the hydrophobic motif in AGC kinases.</title>
        <authorList>
            <person name="Silber J."/>
            <person name="Antal T.L."/>
            <person name="Gammeltoft S."/>
            <person name="Rasmussen T.E."/>
        </authorList>
    </citation>
    <scope>CATALYTIC ACTIVITY</scope>
    <scope>AUTOPHOSPHORYLATION</scope>
</reference>
<reference key="7">
    <citation type="journal article" date="2004" name="EMBO J.">
        <title>A protein kinase target of a PDK1 signalling pathway is involved in root hair growth in Arabidopsis.</title>
        <authorList>
            <person name="Anthony R.G."/>
            <person name="Henriques R."/>
            <person name="Helfer A."/>
            <person name="Meszaros T."/>
            <person name="Rios G."/>
            <person name="Testerink C."/>
            <person name="Munnik T."/>
            <person name="Deak M."/>
            <person name="Koncz C."/>
            <person name="Boegre L."/>
        </authorList>
    </citation>
    <scope>FUNCTION</scope>
    <scope>TISSUE SPECIFICITY</scope>
    <scope>INTERACTION WITH D6PK AND OXI1</scope>
</reference>
<reference key="8">
    <citation type="journal article" date="2006" name="Biochimie">
        <title>Arabidopsis PDK1: identification of sites important for activity and downstream phosphorylation of S6 kinase.</title>
        <authorList>
            <person name="Otterhag L."/>
            <person name="Gustavsson N."/>
            <person name="Alsterfjord M."/>
            <person name="Pical C."/>
            <person name="Lehrach H."/>
            <person name="Gobom J."/>
            <person name="Sommarin M."/>
        </authorList>
    </citation>
    <scope>PHOSPHORYLATION AT SER-177; SER-276; SER-382 AND THR-211</scope>
    <scope>IDENTIFICATION BY MASS SPECTROMETRY</scope>
    <scope>MUTAGENESIS OF ASP-167; THR-176; SER-177; THR-211; SER-276 AND SER-382</scope>
</reference>
<reference key="9">
    <citation type="journal article" date="2006" name="J. Biol. Chem.">
        <title>Structural and functional insights into the regulation of Arabidopsis AGC VIIIa kinases.</title>
        <authorList>
            <person name="Zegzouti H."/>
            <person name="Li W."/>
            <person name="Lorenz T.C."/>
            <person name="Xie M."/>
            <person name="Payne C.T."/>
            <person name="Smith K."/>
            <person name="Glenny S."/>
            <person name="Payne G.S."/>
            <person name="Christensen S.K."/>
        </authorList>
    </citation>
    <scope>FUNCTION</scope>
    <scope>INTERACTION WITH AGC1-5 AND AGC1-7</scope>
</reference>
<reference key="10">
    <citation type="journal article" date="2006" name="J. Biol. Chem.">
        <title>The Arabidopsis protein kinase PTI1-2 is activated by convergent phosphatidic acid and oxidative stress signaling pathways downstream of PDK1 and OXI1.</title>
        <authorList>
            <person name="Anthony R.G."/>
            <person name="Khan S."/>
            <person name="Costa J."/>
            <person name="Pais M.S."/>
            <person name="Boegre L."/>
        </authorList>
    </citation>
    <scope>ACTIVITY REGULATION</scope>
</reference>
<reference key="11">
    <citation type="journal article" date="2006" name="Proc. Natl. Acad. Sci. U.S.A.">
        <title>Phosphorylation and activation of PINOID by the phospholipid signaling kinase 3-phosphoinositide-dependent protein kinase 1 (PDK1) in Arabidopsis.</title>
        <authorList>
            <person name="Zegzouti H."/>
            <person name="Anthony R.G."/>
            <person name="Jahchan N."/>
            <person name="Boegre L."/>
            <person name="Christensen S.K."/>
        </authorList>
    </citation>
    <scope>FUNCTION</scope>
    <scope>INTERACTION WITH PID</scope>
</reference>
<reference key="12">
    <citation type="journal article" date="2006" name="Plant Cell">
        <title>Arabidopsis TARGET OF RAPAMYCIN interacts with RAPTOR, which regulates the activity of S6 kinase in response to osmotic stress signals.</title>
        <authorList>
            <person name="Mahfouz M.M."/>
            <person name="Kim S."/>
            <person name="Delauney A.J."/>
            <person name="Verma D.P."/>
        </authorList>
    </citation>
    <scope>FUNCTION</scope>
</reference>
<reference key="13">
    <citation type="journal article" date="2009" name="Plant Physiol.">
        <title>Large-scale Arabidopsis phosphoproteome profiling reveals novel chloroplast kinase substrates and phosphorylation networks.</title>
        <authorList>
            <person name="Reiland S."/>
            <person name="Messerli G."/>
            <person name="Baerenfaller K."/>
            <person name="Gerrits B."/>
            <person name="Endler A."/>
            <person name="Grossmann J."/>
            <person name="Gruissem W."/>
            <person name="Baginsky S."/>
        </authorList>
    </citation>
    <scope>PHOSPHORYLATION [LARGE SCALE ANALYSIS] AT SER-337</scope>
    <scope>IDENTIFICATION BY MASS SPECTROMETRY [LARGE SCALE ANALYSIS]</scope>
</reference>
<feature type="chain" id="PRO_0000399902" description="3-phosphoinositide-dependent protein kinase 1">
    <location>
        <begin position="1"/>
        <end position="491"/>
    </location>
</feature>
<feature type="domain" description="Protein kinase" evidence="4">
    <location>
        <begin position="44"/>
        <end position="311"/>
    </location>
</feature>
<feature type="domain" description="PH">
    <location>
        <begin position="386"/>
        <end position="491"/>
    </location>
</feature>
<feature type="region of interest" description="PIF-pocket" evidence="2">
    <location>
        <begin position="75"/>
        <end position="119"/>
    </location>
</feature>
<feature type="region of interest" description="PIF-binding" evidence="3">
    <location>
        <begin position="77"/>
        <end position="112"/>
    </location>
</feature>
<feature type="region of interest" description="Activation loop">
    <location>
        <begin position="185"/>
        <end position="222"/>
    </location>
</feature>
<feature type="region of interest" description="Disordered" evidence="6">
    <location>
        <begin position="321"/>
        <end position="377"/>
    </location>
</feature>
<feature type="compositionally biased region" description="Low complexity" evidence="6">
    <location>
        <begin position="365"/>
        <end position="376"/>
    </location>
</feature>
<feature type="active site" description="Proton acceptor" evidence="4 5">
    <location>
        <position position="167"/>
    </location>
</feature>
<feature type="binding site" evidence="2">
    <location>
        <begin position="54"/>
        <end position="56"/>
    </location>
    <ligand>
        <name>ATP</name>
        <dbReference type="ChEBI" id="CHEBI:30616"/>
    </ligand>
</feature>
<feature type="binding site" evidence="2">
    <location>
        <position position="73"/>
    </location>
    <ligand>
        <name>ATP</name>
        <dbReference type="ChEBI" id="CHEBI:30616"/>
    </ligand>
</feature>
<feature type="binding site" evidence="2">
    <location>
        <begin position="122"/>
        <end position="124"/>
    </location>
    <ligand>
        <name>ATP</name>
        <dbReference type="ChEBI" id="CHEBI:30616"/>
    </ligand>
</feature>
<feature type="binding site" evidence="2">
    <location>
        <position position="128"/>
    </location>
    <ligand>
        <name>ATP</name>
        <dbReference type="ChEBI" id="CHEBI:30616"/>
    </ligand>
</feature>
<feature type="binding site" evidence="2">
    <location>
        <position position="171"/>
    </location>
    <ligand>
        <name>ATP</name>
        <dbReference type="ChEBI" id="CHEBI:30616"/>
    </ligand>
</feature>
<feature type="binding site" evidence="2">
    <location>
        <position position="185"/>
    </location>
    <ligand>
        <name>ATP</name>
        <dbReference type="ChEBI" id="CHEBI:30616"/>
    </ligand>
</feature>
<feature type="modified residue" description="Phosphoserine" evidence="10">
    <location>
        <position position="177"/>
    </location>
</feature>
<feature type="modified residue" description="Phosphothreonine; by autocatalysis" evidence="10">
    <location>
        <position position="211"/>
    </location>
</feature>
<feature type="modified residue" description="Phosphoserine" evidence="10">
    <location>
        <position position="276"/>
    </location>
</feature>
<feature type="modified residue" description="Phosphoserine" evidence="16">
    <location>
        <position position="337"/>
    </location>
</feature>
<feature type="modified residue" description="Phosphoserine" evidence="10">
    <location>
        <position position="382"/>
    </location>
</feature>
<feature type="mutagenesis site" description="Abolishes autophosphorylation." evidence="10">
    <original>D</original>
    <variation>A</variation>
    <location>
        <position position="167"/>
    </location>
</feature>
<feature type="mutagenesis site" description="Strongly reduces autophosphorylation." evidence="10">
    <original>T</original>
    <variation>A</variation>
    <location>
        <position position="176"/>
    </location>
</feature>
<feature type="mutagenesis site" description="Reduces autophosphorylation." evidence="10">
    <original>S</original>
    <variation>A</variation>
    <location>
        <position position="177"/>
    </location>
</feature>
<feature type="mutagenesis site" description="Strongly reduces autophosphorylation." evidence="10">
    <original>T</original>
    <variation>A</variation>
    <location>
        <position position="211"/>
    </location>
</feature>
<feature type="mutagenesis site" description="Abolishes autophosphorylation." evidence="10">
    <original>S</original>
    <variation>A</variation>
    <location>
        <position position="276"/>
    </location>
</feature>
<feature type="mutagenesis site" description="Slightly reduces autophosphorylation." evidence="10">
    <original>S</original>
    <variation>A</variation>
    <location>
        <position position="382"/>
    </location>
</feature>
<proteinExistence type="evidence at protein level"/>
<accession>Q9XF67</accession>
<accession>Q9LZ74</accession>
<evidence type="ECO:0000250" key="1"/>
<evidence type="ECO:0000250" key="2">
    <source>
        <dbReference type="UniProtKB" id="O15530"/>
    </source>
</evidence>
<evidence type="ECO:0000255" key="3"/>
<evidence type="ECO:0000255" key="4">
    <source>
        <dbReference type="PROSITE-ProRule" id="PRU00159"/>
    </source>
</evidence>
<evidence type="ECO:0000255" key="5">
    <source>
        <dbReference type="PROSITE-ProRule" id="PRU10027"/>
    </source>
</evidence>
<evidence type="ECO:0000256" key="6">
    <source>
        <dbReference type="SAM" id="MobiDB-lite"/>
    </source>
</evidence>
<evidence type="ECO:0000269" key="7">
    <source>
    </source>
</evidence>
<evidence type="ECO:0000269" key="8">
    <source>
    </source>
</evidence>
<evidence type="ECO:0000269" key="9">
    <source>
    </source>
</evidence>
<evidence type="ECO:0000269" key="10">
    <source>
    </source>
</evidence>
<evidence type="ECO:0000269" key="11">
    <source>
    </source>
</evidence>
<evidence type="ECO:0000269" key="12">
    <source>
    </source>
</evidence>
<evidence type="ECO:0000269" key="13">
    <source>
    </source>
</evidence>
<evidence type="ECO:0000269" key="14">
    <source>
    </source>
</evidence>
<evidence type="ECO:0000305" key="15"/>
<evidence type="ECO:0007744" key="16">
    <source>
    </source>
</evidence>
<organism>
    <name type="scientific">Arabidopsis thaliana</name>
    <name type="common">Mouse-ear cress</name>
    <dbReference type="NCBI Taxonomy" id="3702"/>
    <lineage>
        <taxon>Eukaryota</taxon>
        <taxon>Viridiplantae</taxon>
        <taxon>Streptophyta</taxon>
        <taxon>Embryophyta</taxon>
        <taxon>Tracheophyta</taxon>
        <taxon>Spermatophyta</taxon>
        <taxon>Magnoliopsida</taxon>
        <taxon>eudicotyledons</taxon>
        <taxon>Gunneridae</taxon>
        <taxon>Pentapetalae</taxon>
        <taxon>rosids</taxon>
        <taxon>malvids</taxon>
        <taxon>Brassicales</taxon>
        <taxon>Brassicaceae</taxon>
        <taxon>Camelineae</taxon>
        <taxon>Arabidopsis</taxon>
    </lineage>
</organism>
<gene>
    <name type="primary">PDPK1</name>
    <name type="synonym">PDK1</name>
    <name type="ordered locus">At5g04510</name>
    <name type="ORF">T32M21.110</name>
</gene>
<name>PDPK1_ARATH</name>
<comment type="function">
    <text evidence="7 8 11 12 13">May couple lipid signals to the activation-loop phosphorylation of several protein kinases of the so-called AGC kinase family. Interacts via its pleckstrin homology domain with phosphatidic acid, PtdIns3P and PtdIns(3,4)P2 and to a lesser extent with PtdIns(4,5)P2 and PtdIns4P. May play a general role in signaling processes controlling the pathogen/stress response, polar auxin transport and development. Transphosphorylates the AGC protein kinases OXI1/AGC2-1, PK1/S6K1, PK19/S6K2 and PID resulting in their activation.</text>
</comment>
<comment type="catalytic activity">
    <reaction evidence="9">
        <text>L-seryl-[protein] + ATP = O-phospho-L-seryl-[protein] + ADP + H(+)</text>
        <dbReference type="Rhea" id="RHEA:17989"/>
        <dbReference type="Rhea" id="RHEA-COMP:9863"/>
        <dbReference type="Rhea" id="RHEA-COMP:11604"/>
        <dbReference type="ChEBI" id="CHEBI:15378"/>
        <dbReference type="ChEBI" id="CHEBI:29999"/>
        <dbReference type="ChEBI" id="CHEBI:30616"/>
        <dbReference type="ChEBI" id="CHEBI:83421"/>
        <dbReference type="ChEBI" id="CHEBI:456216"/>
        <dbReference type="EC" id="2.7.11.1"/>
    </reaction>
</comment>
<comment type="catalytic activity">
    <reaction evidence="9">
        <text>L-threonyl-[protein] + ATP = O-phospho-L-threonyl-[protein] + ADP + H(+)</text>
        <dbReference type="Rhea" id="RHEA:46608"/>
        <dbReference type="Rhea" id="RHEA-COMP:11060"/>
        <dbReference type="Rhea" id="RHEA-COMP:11605"/>
        <dbReference type="ChEBI" id="CHEBI:15378"/>
        <dbReference type="ChEBI" id="CHEBI:30013"/>
        <dbReference type="ChEBI" id="CHEBI:30616"/>
        <dbReference type="ChEBI" id="CHEBI:61977"/>
        <dbReference type="ChEBI" id="CHEBI:456216"/>
        <dbReference type="EC" id="2.7.11.1"/>
    </reaction>
</comment>
<comment type="activity regulation">
    <text evidence="14">Activated by phosphatidic acid (PA) and in response to the fungal elicitor xylanase.</text>
</comment>
<comment type="subunit">
    <text evidence="8 12 13">Interacts with AGC1-5 and AGC1-7 (PubMed:16973627). Interacts with the C-terminal PIF domain of the protein kinases D6PK/AGC1-1, OXI1/AGC2-1 and PID (PubMed:14749726, PubMed:16601102).</text>
</comment>
<comment type="interaction">
    <interactant intactId="EBI-1103587">
        <id>Q9XF67</id>
    </interactant>
    <interactant intactId="EBI-1103747">
        <id>Q9LTW5</id>
        <label>AGC1-5</label>
    </interactant>
    <organismsDiffer>false</organismsDiffer>
    <experiments>3</experiments>
</comment>
<comment type="interaction">
    <interactant intactId="EBI-1103587">
        <id>Q9XF67</id>
    </interactant>
    <interactant intactId="EBI-1103730">
        <id>Q1PFB9</id>
        <label>AGC1-7</label>
    </interactant>
    <organismsDiffer>false</organismsDiffer>
    <experiments>2</experiments>
</comment>
<comment type="interaction">
    <interactant intactId="EBI-1103587">
        <id>Q9XF67</id>
    </interactant>
    <interactant intactId="EBI-1103570">
        <id>Q9FG74</id>
        <label>D6PK</label>
    </interactant>
    <organismsDiffer>false</organismsDiffer>
    <experiments>2</experiments>
</comment>
<comment type="interaction">
    <interactant intactId="EBI-1103587">
        <id>Q9XF67</id>
    </interactant>
    <interactant intactId="EBI-1103605">
        <id>Q9SUA3</id>
        <label>D6PKL1</label>
    </interactant>
    <organismsDiffer>false</organismsDiffer>
    <experiments>3</experiments>
</comment>
<comment type="interaction">
    <interactant intactId="EBI-1103587">
        <id>Q9XF67</id>
    </interactant>
    <interactant intactId="EBI-1103628">
        <id>Q39183</id>
        <label>D6PKL2</label>
    </interactant>
    <organismsDiffer>false</organismsDiffer>
    <experiments>4</experiments>
</comment>
<comment type="interaction">
    <interactant intactId="EBI-1103587">
        <id>Q9XF67</id>
    </interactant>
    <interactant intactId="EBI-1103648">
        <id>Q05999</id>
        <label>D6PKL3</label>
    </interactant>
    <organismsDiffer>false</organismsDiffer>
    <experiments>2</experiments>
</comment>
<comment type="interaction">
    <interactant intactId="EBI-1103587">
        <id>Q9XF67</id>
    </interactant>
    <interactant intactId="EBI-1103882">
        <id>Q9SJM3</id>
        <label>KIPK2</label>
    </interactant>
    <organismsDiffer>false</organismsDiffer>
    <experiments>2</experiments>
</comment>
<comment type="interaction">
    <interactant intactId="EBI-1103587">
        <id>Q9XF67</id>
    </interactant>
    <interactant intactId="EBI-1103691">
        <id>Q9LUK3</id>
        <label>PAXL</label>
    </interactant>
    <organismsDiffer>false</organismsDiffer>
    <experiments>2</experiments>
</comment>
<comment type="interaction">
    <interactant intactId="EBI-1103587">
        <id>Q9XF67</id>
    </interactant>
    <interactant intactId="EBI-1393382">
        <id>O64682</id>
        <label>PID</label>
    </interactant>
    <organismsDiffer>false</organismsDiffer>
    <experiments>3</experiments>
</comment>
<comment type="interaction">
    <interactant intactId="EBI-1103587">
        <id>Q9XF67</id>
    </interactant>
    <interactant intactId="EBI-1103769">
        <id>Q64FQ2</id>
        <label>PID2</label>
    </interactant>
    <organismsDiffer>false</organismsDiffer>
    <experiments>2</experiments>
</comment>
<comment type="interaction">
    <interactant intactId="EBI-1103587">
        <id>Q9XF67</id>
    </interactant>
    <interactant intactId="EBI-1103713">
        <id>F4I4F2</id>
        <label>RHS3</label>
    </interactant>
    <organismsDiffer>false</organismsDiffer>
    <experiments>2</experiments>
</comment>
<comment type="interaction">
    <interactant intactId="EBI-1103587">
        <id>Q9XF67</id>
    </interactant>
    <interactant intactId="EBI-1103792">
        <id>Q9M1P3</id>
        <label>T18B22.10</label>
    </interactant>
    <organismsDiffer>false</organismsDiffer>
    <experiments>2</experiments>
</comment>
<comment type="interaction">
    <interactant intactId="EBI-1103587">
        <id>Q9XF67</id>
    </interactant>
    <interactant intactId="EBI-1103670">
        <id>Q8RY37</id>
    </interactant>
    <organismsDiffer>false</organismsDiffer>
    <experiments>2</experiments>
</comment>
<comment type="subcellular location">
    <subcellularLocation>
        <location evidence="1">Cytoplasm</location>
    </subcellularLocation>
    <subcellularLocation>
        <location evidence="1">Membrane</location>
        <topology evidence="1">Peripheral membrane protein</topology>
    </subcellularLocation>
    <text evidence="1">Membrane-associated after cell stimulation.</text>
</comment>
<comment type="alternative products">
    <event type="alternative splicing"/>
    <isoform>
        <id>Q9XF67-1</id>
        <name>1</name>
        <sequence type="displayed"/>
    </isoform>
    <text>A number of isoforms are produced. According to EST sequences.</text>
</comment>
<comment type="tissue specificity">
    <text evidence="8">Ubiquitous.</text>
</comment>
<comment type="domain">
    <text>The PH domain is responsible for the interaction with the 3-phosphoinositides. The activation loop within the kinase domain is the target of phosphorylation. The PIF-binding region in the kinase domain of PDK1 acts as a docking site, enabling it to interact with and enhance the phosphorylation of substrates containing the PIF motif.</text>
</comment>
<comment type="domain">
    <text evidence="2">The PIF-pocket is a small lobe in the catalytic domain required by the enzyme for the binding to the hydrophobic motif of its substrates. It is an allosteric regulatory site that can accommodate small compounds acting as allosteric inhibitors.</text>
</comment>
<comment type="PTM">
    <text evidence="10">Phosphorylation on Thr-211 in the activation loop is required for full activity. PDK1 itself can autophosphorylate Thr-211, leading to its own activation.</text>
</comment>
<comment type="similarity">
    <text evidence="15">Belongs to the protein kinase superfamily. AGC Ser/Thr protein kinase family. PDPK1 subfamily.</text>
</comment>
<comment type="sequence caution" evidence="15">
    <conflict type="erroneous initiation">
        <sequence resource="EMBL-CDS" id="CAB85557"/>
    </conflict>
    <text>Truncated N-terminus.</text>
</comment>
<protein>
    <recommendedName>
        <fullName>3-phosphoinositide-dependent protein kinase 1</fullName>
        <shortName>AtPDK1</shortName>
        <ecNumber>2.7.11.1</ecNumber>
    </recommendedName>
</protein>